<keyword id="KW-0210">Decarboxylase</keyword>
<keyword id="KW-0456">Lyase</keyword>
<keyword id="KW-0665">Pyrimidine biosynthesis</keyword>
<keyword id="KW-1185">Reference proteome</keyword>
<accession>Q7VTM9</accession>
<protein>
    <recommendedName>
        <fullName evidence="1">Orotidine 5'-phosphate decarboxylase</fullName>
        <ecNumber evidence="1">4.1.1.23</ecNumber>
    </recommendedName>
    <alternativeName>
        <fullName evidence="1">OMP decarboxylase</fullName>
        <shortName evidence="1">OMPDCase</shortName>
        <shortName evidence="1">OMPdecase</shortName>
    </alternativeName>
</protein>
<comment type="catalytic activity">
    <reaction evidence="1">
        <text>orotidine 5'-phosphate + H(+) = UMP + CO2</text>
        <dbReference type="Rhea" id="RHEA:11596"/>
        <dbReference type="ChEBI" id="CHEBI:15378"/>
        <dbReference type="ChEBI" id="CHEBI:16526"/>
        <dbReference type="ChEBI" id="CHEBI:57538"/>
        <dbReference type="ChEBI" id="CHEBI:57865"/>
        <dbReference type="EC" id="4.1.1.23"/>
    </reaction>
</comment>
<comment type="pathway">
    <text evidence="1">Pyrimidine metabolism; UMP biosynthesis via de novo pathway; UMP from orotate: step 2/2.</text>
</comment>
<comment type="similarity">
    <text evidence="1">Belongs to the OMP decarboxylase family. Type 2 subfamily.</text>
</comment>
<gene>
    <name evidence="1" type="primary">pyrF</name>
    <name type="ordered locus">BP3490</name>
</gene>
<evidence type="ECO:0000255" key="1">
    <source>
        <dbReference type="HAMAP-Rule" id="MF_01215"/>
    </source>
</evidence>
<sequence>MTFLKKLEHAWSASQSLLQVGLDPDPKRFPRELEGKPDAIFQFCRDIVDATAPYACSFKPQIAYFAAHRAEDQLEALCQHIRAQHPDLPIVLDAKRGDIGSTAENYAREAFERYQAHALTVSPYMGLDSVEPYLAWGDRGVIVLCRTSNPGGSDLQFLKMADGQPLYLHVAGLVADKWNANGQCGLVVGATFPNELAAVRQRIGDAVPLLVPGIGAQGGDINATVQAGANSAGAGMMINSSRAILYASTGEDWRQAAGEAARGLRDAINAVRT</sequence>
<organism>
    <name type="scientific">Bordetella pertussis (strain Tohama I / ATCC BAA-589 / NCTC 13251)</name>
    <dbReference type="NCBI Taxonomy" id="257313"/>
    <lineage>
        <taxon>Bacteria</taxon>
        <taxon>Pseudomonadati</taxon>
        <taxon>Pseudomonadota</taxon>
        <taxon>Betaproteobacteria</taxon>
        <taxon>Burkholderiales</taxon>
        <taxon>Alcaligenaceae</taxon>
        <taxon>Bordetella</taxon>
    </lineage>
</organism>
<name>PYRF_BORPE</name>
<proteinExistence type="inferred from homology"/>
<feature type="chain" id="PRO_1000066459" description="Orotidine 5'-phosphate decarboxylase">
    <location>
        <begin position="1"/>
        <end position="273"/>
    </location>
</feature>
<feature type="active site" description="Proton donor" evidence="1">
    <location>
        <position position="95"/>
    </location>
</feature>
<dbReference type="EC" id="4.1.1.23" evidence="1"/>
<dbReference type="EMBL" id="BX640421">
    <property type="protein sequence ID" value="CAE43751.1"/>
    <property type="molecule type" value="Genomic_DNA"/>
</dbReference>
<dbReference type="RefSeq" id="NP_882009.1">
    <property type="nucleotide sequence ID" value="NC_002929.2"/>
</dbReference>
<dbReference type="RefSeq" id="WP_003808606.1">
    <property type="nucleotide sequence ID" value="NZ_CP039022.1"/>
</dbReference>
<dbReference type="SMR" id="Q7VTM9"/>
<dbReference type="STRING" id="257313.BP3490"/>
<dbReference type="PaxDb" id="257313-BP3490"/>
<dbReference type="GeneID" id="93202613"/>
<dbReference type="KEGG" id="bpe:BP3490"/>
<dbReference type="PATRIC" id="fig|257313.5.peg.3778"/>
<dbReference type="eggNOG" id="COG0284">
    <property type="taxonomic scope" value="Bacteria"/>
</dbReference>
<dbReference type="HOGENOM" id="CLU_060704_1_0_4"/>
<dbReference type="UniPathway" id="UPA00070">
    <property type="reaction ID" value="UER00120"/>
</dbReference>
<dbReference type="Proteomes" id="UP000002676">
    <property type="component" value="Chromosome"/>
</dbReference>
<dbReference type="GO" id="GO:0004590">
    <property type="term" value="F:orotidine-5'-phosphate decarboxylase activity"/>
    <property type="evidence" value="ECO:0007669"/>
    <property type="project" value="UniProtKB-UniRule"/>
</dbReference>
<dbReference type="GO" id="GO:0006207">
    <property type="term" value="P:'de novo' pyrimidine nucleobase biosynthetic process"/>
    <property type="evidence" value="ECO:0007669"/>
    <property type="project" value="InterPro"/>
</dbReference>
<dbReference type="GO" id="GO:0044205">
    <property type="term" value="P:'de novo' UMP biosynthetic process"/>
    <property type="evidence" value="ECO:0007669"/>
    <property type="project" value="UniProtKB-UniRule"/>
</dbReference>
<dbReference type="CDD" id="cd04725">
    <property type="entry name" value="OMP_decarboxylase_like"/>
    <property type="match status" value="1"/>
</dbReference>
<dbReference type="Gene3D" id="3.20.20.70">
    <property type="entry name" value="Aldolase class I"/>
    <property type="match status" value="1"/>
</dbReference>
<dbReference type="HAMAP" id="MF_01215">
    <property type="entry name" value="OMPdecase_type2"/>
    <property type="match status" value="1"/>
</dbReference>
<dbReference type="InterPro" id="IPR013785">
    <property type="entry name" value="Aldolase_TIM"/>
</dbReference>
<dbReference type="InterPro" id="IPR018089">
    <property type="entry name" value="OMPdecase_AS"/>
</dbReference>
<dbReference type="InterPro" id="IPR011995">
    <property type="entry name" value="OMPdecase_type-2"/>
</dbReference>
<dbReference type="InterPro" id="IPR001754">
    <property type="entry name" value="OMPdeCOase_dom"/>
</dbReference>
<dbReference type="InterPro" id="IPR011060">
    <property type="entry name" value="RibuloseP-bd_barrel"/>
</dbReference>
<dbReference type="NCBIfam" id="TIGR02127">
    <property type="entry name" value="pyrF_sub2"/>
    <property type="match status" value="1"/>
</dbReference>
<dbReference type="PANTHER" id="PTHR43375">
    <property type="entry name" value="OROTIDINE 5'-PHOSPHATE DECARBOXYLASE"/>
    <property type="match status" value="1"/>
</dbReference>
<dbReference type="PANTHER" id="PTHR43375:SF1">
    <property type="entry name" value="OROTIDINE 5'-PHOSPHATE DECARBOXYLASE"/>
    <property type="match status" value="1"/>
</dbReference>
<dbReference type="Pfam" id="PF00215">
    <property type="entry name" value="OMPdecase"/>
    <property type="match status" value="1"/>
</dbReference>
<dbReference type="SMART" id="SM00934">
    <property type="entry name" value="OMPdecase"/>
    <property type="match status" value="1"/>
</dbReference>
<dbReference type="SUPFAM" id="SSF51366">
    <property type="entry name" value="Ribulose-phoshate binding barrel"/>
    <property type="match status" value="1"/>
</dbReference>
<dbReference type="PROSITE" id="PS00156">
    <property type="entry name" value="OMPDECASE"/>
    <property type="match status" value="1"/>
</dbReference>
<reference key="1">
    <citation type="journal article" date="2003" name="Nat. Genet.">
        <title>Comparative analysis of the genome sequences of Bordetella pertussis, Bordetella parapertussis and Bordetella bronchiseptica.</title>
        <authorList>
            <person name="Parkhill J."/>
            <person name="Sebaihia M."/>
            <person name="Preston A."/>
            <person name="Murphy L.D."/>
            <person name="Thomson N.R."/>
            <person name="Harris D.E."/>
            <person name="Holden M.T.G."/>
            <person name="Churcher C.M."/>
            <person name="Bentley S.D."/>
            <person name="Mungall K.L."/>
            <person name="Cerdeno-Tarraga A.-M."/>
            <person name="Temple L."/>
            <person name="James K.D."/>
            <person name="Harris B."/>
            <person name="Quail M.A."/>
            <person name="Achtman M."/>
            <person name="Atkin R."/>
            <person name="Baker S."/>
            <person name="Basham D."/>
            <person name="Bason N."/>
            <person name="Cherevach I."/>
            <person name="Chillingworth T."/>
            <person name="Collins M."/>
            <person name="Cronin A."/>
            <person name="Davis P."/>
            <person name="Doggett J."/>
            <person name="Feltwell T."/>
            <person name="Goble A."/>
            <person name="Hamlin N."/>
            <person name="Hauser H."/>
            <person name="Holroyd S."/>
            <person name="Jagels K."/>
            <person name="Leather S."/>
            <person name="Moule S."/>
            <person name="Norberczak H."/>
            <person name="O'Neil S."/>
            <person name="Ormond D."/>
            <person name="Price C."/>
            <person name="Rabbinowitsch E."/>
            <person name="Rutter S."/>
            <person name="Sanders M."/>
            <person name="Saunders D."/>
            <person name="Seeger K."/>
            <person name="Sharp S."/>
            <person name="Simmonds M."/>
            <person name="Skelton J."/>
            <person name="Squares R."/>
            <person name="Squares S."/>
            <person name="Stevens K."/>
            <person name="Unwin L."/>
            <person name="Whitehead S."/>
            <person name="Barrell B.G."/>
            <person name="Maskell D.J."/>
        </authorList>
    </citation>
    <scope>NUCLEOTIDE SEQUENCE [LARGE SCALE GENOMIC DNA]</scope>
    <source>
        <strain>Tohama I / ATCC BAA-589 / NCTC 13251</strain>
    </source>
</reference>